<evidence type="ECO:0000255" key="1">
    <source>
        <dbReference type="HAMAP-Rule" id="MF_01249"/>
    </source>
</evidence>
<accession>A1KSZ9</accession>
<comment type="function">
    <text evidence="1">Catalyzes the ATP- as well as the pyrophosphate-dependent phosphorylation of a specific serine residue in HPr, a phosphocarrier protein of the phosphoenolpyruvate-dependent sugar phosphotransferase system (PTS). HprK/P also catalyzes the pyrophosphate-producing, inorganic phosphate-dependent dephosphorylation (phosphorolysis) of seryl-phosphorylated HPr (P-Ser-HPr).</text>
</comment>
<comment type="catalytic activity">
    <reaction evidence="1">
        <text>[HPr protein]-L-serine + ATP = [HPr protein]-O-phospho-L-serine + ADP + H(+)</text>
        <dbReference type="Rhea" id="RHEA:46600"/>
        <dbReference type="Rhea" id="RHEA-COMP:11602"/>
        <dbReference type="Rhea" id="RHEA-COMP:11603"/>
        <dbReference type="ChEBI" id="CHEBI:15378"/>
        <dbReference type="ChEBI" id="CHEBI:29999"/>
        <dbReference type="ChEBI" id="CHEBI:30616"/>
        <dbReference type="ChEBI" id="CHEBI:83421"/>
        <dbReference type="ChEBI" id="CHEBI:456216"/>
    </reaction>
</comment>
<comment type="catalytic activity">
    <reaction evidence="1">
        <text>[HPr protein]-O-phospho-L-serine + phosphate + H(+) = [HPr protein]-L-serine + diphosphate</text>
        <dbReference type="Rhea" id="RHEA:46604"/>
        <dbReference type="Rhea" id="RHEA-COMP:11602"/>
        <dbReference type="Rhea" id="RHEA-COMP:11603"/>
        <dbReference type="ChEBI" id="CHEBI:15378"/>
        <dbReference type="ChEBI" id="CHEBI:29999"/>
        <dbReference type="ChEBI" id="CHEBI:33019"/>
        <dbReference type="ChEBI" id="CHEBI:43474"/>
        <dbReference type="ChEBI" id="CHEBI:83421"/>
    </reaction>
</comment>
<comment type="cofactor">
    <cofactor evidence="1">
        <name>Mg(2+)</name>
        <dbReference type="ChEBI" id="CHEBI:18420"/>
    </cofactor>
</comment>
<comment type="subunit">
    <text evidence="1">Homohexamer.</text>
</comment>
<comment type="domain">
    <text evidence="1">The Walker A ATP-binding motif also binds Pi and PPi.</text>
</comment>
<comment type="miscellaneous">
    <text evidence="1">Both phosphorylation and phosphorolysis are carried out by the same active site and suggest a common mechanism for both reactions.</text>
</comment>
<comment type="similarity">
    <text evidence="1">Belongs to the HPrK/P family.</text>
</comment>
<dbReference type="EC" id="2.7.11.-" evidence="1"/>
<dbReference type="EC" id="2.7.4.-" evidence="1"/>
<dbReference type="EMBL" id="AM421808">
    <property type="protein sequence ID" value="CAM09981.1"/>
    <property type="molecule type" value="Genomic_DNA"/>
</dbReference>
<dbReference type="RefSeq" id="WP_002221228.1">
    <property type="nucleotide sequence ID" value="NC_008767.1"/>
</dbReference>
<dbReference type="SMR" id="A1KSZ9"/>
<dbReference type="KEGG" id="nmc:NMC0690"/>
<dbReference type="HOGENOM" id="CLU_052030_0_2_4"/>
<dbReference type="Proteomes" id="UP000002286">
    <property type="component" value="Chromosome"/>
</dbReference>
<dbReference type="GO" id="GO:0005524">
    <property type="term" value="F:ATP binding"/>
    <property type="evidence" value="ECO:0007669"/>
    <property type="project" value="UniProtKB-UniRule"/>
</dbReference>
<dbReference type="GO" id="GO:0000287">
    <property type="term" value="F:magnesium ion binding"/>
    <property type="evidence" value="ECO:0007669"/>
    <property type="project" value="UniProtKB-UniRule"/>
</dbReference>
<dbReference type="GO" id="GO:0000155">
    <property type="term" value="F:phosphorelay sensor kinase activity"/>
    <property type="evidence" value="ECO:0007669"/>
    <property type="project" value="InterPro"/>
</dbReference>
<dbReference type="GO" id="GO:0004674">
    <property type="term" value="F:protein serine/threonine kinase activity"/>
    <property type="evidence" value="ECO:0007669"/>
    <property type="project" value="UniProtKB-KW"/>
</dbReference>
<dbReference type="GO" id="GO:0004712">
    <property type="term" value="F:protein serine/threonine/tyrosine kinase activity"/>
    <property type="evidence" value="ECO:0007669"/>
    <property type="project" value="UniProtKB-UniRule"/>
</dbReference>
<dbReference type="GO" id="GO:0006109">
    <property type="term" value="P:regulation of carbohydrate metabolic process"/>
    <property type="evidence" value="ECO:0007669"/>
    <property type="project" value="UniProtKB-UniRule"/>
</dbReference>
<dbReference type="CDD" id="cd01918">
    <property type="entry name" value="HprK_C"/>
    <property type="match status" value="1"/>
</dbReference>
<dbReference type="FunFam" id="3.40.50.300:FF:000174">
    <property type="entry name" value="HPr kinase/phosphorylase"/>
    <property type="match status" value="1"/>
</dbReference>
<dbReference type="Gene3D" id="3.40.1390.20">
    <property type="entry name" value="HprK N-terminal domain-like"/>
    <property type="match status" value="1"/>
</dbReference>
<dbReference type="Gene3D" id="3.40.50.300">
    <property type="entry name" value="P-loop containing nucleotide triphosphate hydrolases"/>
    <property type="match status" value="1"/>
</dbReference>
<dbReference type="HAMAP" id="MF_01249">
    <property type="entry name" value="HPr_kinase"/>
    <property type="match status" value="1"/>
</dbReference>
<dbReference type="InterPro" id="IPR003755">
    <property type="entry name" value="HPr(Ser)_kin/Pase"/>
</dbReference>
<dbReference type="InterPro" id="IPR011104">
    <property type="entry name" value="Hpr_kin/Pase_C"/>
</dbReference>
<dbReference type="InterPro" id="IPR011126">
    <property type="entry name" value="Hpr_kin/Pase_Hpr_N"/>
</dbReference>
<dbReference type="InterPro" id="IPR027417">
    <property type="entry name" value="P-loop_NTPase"/>
</dbReference>
<dbReference type="InterPro" id="IPR028979">
    <property type="entry name" value="Ser_kin/Pase_Hpr-like_N_sf"/>
</dbReference>
<dbReference type="NCBIfam" id="TIGR00679">
    <property type="entry name" value="hpr-ser"/>
    <property type="match status" value="1"/>
</dbReference>
<dbReference type="PANTHER" id="PTHR30305:SF1">
    <property type="entry name" value="HPR KINASE_PHOSPHORYLASE"/>
    <property type="match status" value="1"/>
</dbReference>
<dbReference type="PANTHER" id="PTHR30305">
    <property type="entry name" value="PROTEIN YJDM-RELATED"/>
    <property type="match status" value="1"/>
</dbReference>
<dbReference type="Pfam" id="PF07475">
    <property type="entry name" value="Hpr_kinase_C"/>
    <property type="match status" value="1"/>
</dbReference>
<dbReference type="Pfam" id="PF02603">
    <property type="entry name" value="Hpr_kinase_N"/>
    <property type="match status" value="1"/>
</dbReference>
<dbReference type="SUPFAM" id="SSF75138">
    <property type="entry name" value="HprK N-terminal domain-like"/>
    <property type="match status" value="1"/>
</dbReference>
<dbReference type="SUPFAM" id="SSF53795">
    <property type="entry name" value="PEP carboxykinase-like"/>
    <property type="match status" value="1"/>
</dbReference>
<proteinExistence type="inferred from homology"/>
<feature type="chain" id="PRO_1000067162" description="HPr kinase/phosphorylase">
    <location>
        <begin position="1"/>
        <end position="320"/>
    </location>
</feature>
<feature type="region of interest" description="Important for the catalytic mechanism of both phosphorylation and dephosphorylation" evidence="1">
    <location>
        <begin position="204"/>
        <end position="213"/>
    </location>
</feature>
<feature type="region of interest" description="Important for the catalytic mechanism of dephosphorylation" evidence="1">
    <location>
        <begin position="269"/>
        <end position="274"/>
    </location>
</feature>
<feature type="active site" evidence="1">
    <location>
        <position position="141"/>
    </location>
</feature>
<feature type="active site" evidence="1">
    <location>
        <position position="162"/>
    </location>
</feature>
<feature type="active site" description="Proton acceptor; for phosphorylation activity. Proton donor; for dephosphorylation activity" evidence="1">
    <location>
        <position position="180"/>
    </location>
</feature>
<feature type="active site" evidence="1">
    <location>
        <position position="248"/>
    </location>
</feature>
<feature type="binding site" evidence="1">
    <location>
        <begin position="156"/>
        <end position="163"/>
    </location>
    <ligand>
        <name>ATP</name>
        <dbReference type="ChEBI" id="CHEBI:30616"/>
    </ligand>
</feature>
<feature type="binding site" evidence="1">
    <location>
        <position position="163"/>
    </location>
    <ligand>
        <name>Mg(2+)</name>
        <dbReference type="ChEBI" id="CHEBI:18420"/>
    </ligand>
</feature>
<feature type="binding site" evidence="1">
    <location>
        <position position="205"/>
    </location>
    <ligand>
        <name>Mg(2+)</name>
        <dbReference type="ChEBI" id="CHEBI:18420"/>
    </ligand>
</feature>
<name>HPRK_NEIMF</name>
<protein>
    <recommendedName>
        <fullName evidence="1">HPr kinase/phosphorylase</fullName>
        <shortName evidence="1">HPrK/P</shortName>
        <ecNumber evidence="1">2.7.11.-</ecNumber>
        <ecNumber evidence="1">2.7.4.-</ecNumber>
    </recommendedName>
    <alternativeName>
        <fullName evidence="1">HPr(Ser) kinase/phosphorylase</fullName>
    </alternativeName>
</protein>
<sequence length="320" mass="35798">MPSISVRRLFDDNQYKLQLAWAAGNSGADNRIGVEADKPVLALVGHLNFIHPNQIQVVGLAESEYLNRLESGETGYQFGNLFDISMSLVIVANGLPVSPGLRDYCHKNDIPLLTSKLESPYLMDVLRIYLQRTLAASSVKHGVFLDVFEIGVLITGHSGLGKSELALELISRGHSLIADDAVELFRIGPETLEGRCSPMLRDFLEVRGLGILNIRHIFGETSIRPKKILQLIINLVEADDEYMKQLDRLSIRTETESILNVNVRSVTLPVAVGRNLAVLVEAAVRNYILQLRGKDSTREFLERHQTQLKENEQNHENRPD</sequence>
<reference key="1">
    <citation type="journal article" date="2007" name="PLoS Genet.">
        <title>Meningococcal genetic variation mechanisms viewed through comparative analysis of serogroup C strain FAM18.</title>
        <authorList>
            <person name="Bentley S.D."/>
            <person name="Vernikos G.S."/>
            <person name="Snyder L.A.S."/>
            <person name="Churcher C."/>
            <person name="Arrowsmith C."/>
            <person name="Chillingworth T."/>
            <person name="Cronin A."/>
            <person name="Davis P.H."/>
            <person name="Holroyd N.E."/>
            <person name="Jagels K."/>
            <person name="Maddison M."/>
            <person name="Moule S."/>
            <person name="Rabbinowitsch E."/>
            <person name="Sharp S."/>
            <person name="Unwin L."/>
            <person name="Whitehead S."/>
            <person name="Quail M.A."/>
            <person name="Achtman M."/>
            <person name="Barrell B.G."/>
            <person name="Saunders N.J."/>
            <person name="Parkhill J."/>
        </authorList>
    </citation>
    <scope>NUCLEOTIDE SEQUENCE [LARGE SCALE GENOMIC DNA]</scope>
    <source>
        <strain>ATCC 700532 / DSM 15464 / FAM18</strain>
    </source>
</reference>
<organism>
    <name type="scientific">Neisseria meningitidis serogroup C / serotype 2a (strain ATCC 700532 / DSM 15464 / FAM18)</name>
    <dbReference type="NCBI Taxonomy" id="272831"/>
    <lineage>
        <taxon>Bacteria</taxon>
        <taxon>Pseudomonadati</taxon>
        <taxon>Pseudomonadota</taxon>
        <taxon>Betaproteobacteria</taxon>
        <taxon>Neisseriales</taxon>
        <taxon>Neisseriaceae</taxon>
        <taxon>Neisseria</taxon>
    </lineage>
</organism>
<keyword id="KW-0067">ATP-binding</keyword>
<keyword id="KW-0418">Kinase</keyword>
<keyword id="KW-0460">Magnesium</keyword>
<keyword id="KW-0479">Metal-binding</keyword>
<keyword id="KW-0511">Multifunctional enzyme</keyword>
<keyword id="KW-0547">Nucleotide-binding</keyword>
<keyword id="KW-0723">Serine/threonine-protein kinase</keyword>
<keyword id="KW-0808">Transferase</keyword>
<gene>
    <name evidence="1" type="primary">hprK</name>
    <name type="ordered locus">NMC0690</name>
</gene>